<organism>
    <name type="scientific">Escherichia coli O127:H6 (strain E2348/69 / EPEC)</name>
    <dbReference type="NCBI Taxonomy" id="574521"/>
    <lineage>
        <taxon>Bacteria</taxon>
        <taxon>Pseudomonadati</taxon>
        <taxon>Pseudomonadota</taxon>
        <taxon>Gammaproteobacteria</taxon>
        <taxon>Enterobacterales</taxon>
        <taxon>Enterobacteriaceae</taxon>
        <taxon>Escherichia</taxon>
    </lineage>
</organism>
<proteinExistence type="inferred from homology"/>
<protein>
    <recommendedName>
        <fullName evidence="1">UPF0306 protein YhbP</fullName>
    </recommendedName>
</protein>
<evidence type="ECO:0000255" key="1">
    <source>
        <dbReference type="HAMAP-Rule" id="MF_00764"/>
    </source>
</evidence>
<dbReference type="EMBL" id="FM180568">
    <property type="protein sequence ID" value="CAS10983.1"/>
    <property type="molecule type" value="Genomic_DNA"/>
</dbReference>
<dbReference type="RefSeq" id="WP_000449449.1">
    <property type="nucleotide sequence ID" value="NC_011601.1"/>
</dbReference>
<dbReference type="SMR" id="B7UJ49"/>
<dbReference type="KEGG" id="ecg:E2348C_3435"/>
<dbReference type="HOGENOM" id="CLU_105087_3_0_6"/>
<dbReference type="Proteomes" id="UP000008205">
    <property type="component" value="Chromosome"/>
</dbReference>
<dbReference type="FunFam" id="2.30.110.10:FF:000003">
    <property type="entry name" value="UPF0306 protein YhbP"/>
    <property type="match status" value="1"/>
</dbReference>
<dbReference type="Gene3D" id="2.30.110.10">
    <property type="entry name" value="Electron Transport, Fmn-binding Protein, Chain A"/>
    <property type="match status" value="1"/>
</dbReference>
<dbReference type="HAMAP" id="MF_00764">
    <property type="entry name" value="UPF0306"/>
    <property type="match status" value="1"/>
</dbReference>
<dbReference type="InterPro" id="IPR012349">
    <property type="entry name" value="Split_barrel_FMN-bd"/>
</dbReference>
<dbReference type="InterPro" id="IPR011194">
    <property type="entry name" value="UPF0306"/>
</dbReference>
<dbReference type="NCBIfam" id="NF002900">
    <property type="entry name" value="PRK03467.1"/>
    <property type="match status" value="1"/>
</dbReference>
<dbReference type="PIRSF" id="PIRSF009554">
    <property type="entry name" value="UCP009554"/>
    <property type="match status" value="1"/>
</dbReference>
<dbReference type="SUPFAM" id="SSF50475">
    <property type="entry name" value="FMN-binding split barrel"/>
    <property type="match status" value="1"/>
</dbReference>
<feature type="chain" id="PRO_1000148421" description="UPF0306 protein YhbP">
    <location>
        <begin position="1"/>
        <end position="140"/>
    </location>
</feature>
<comment type="similarity">
    <text evidence="1">Belongs to the UPF0306 family.</text>
</comment>
<name>YHBP_ECO27</name>
<reference key="1">
    <citation type="journal article" date="2009" name="J. Bacteriol.">
        <title>Complete genome sequence and comparative genome analysis of enteropathogenic Escherichia coli O127:H6 strain E2348/69.</title>
        <authorList>
            <person name="Iguchi A."/>
            <person name="Thomson N.R."/>
            <person name="Ogura Y."/>
            <person name="Saunders D."/>
            <person name="Ooka T."/>
            <person name="Henderson I.R."/>
            <person name="Harris D."/>
            <person name="Asadulghani M."/>
            <person name="Kurokawa K."/>
            <person name="Dean P."/>
            <person name="Kenny B."/>
            <person name="Quail M.A."/>
            <person name="Thurston S."/>
            <person name="Dougan G."/>
            <person name="Hayashi T."/>
            <person name="Parkhill J."/>
            <person name="Frankel G."/>
        </authorList>
    </citation>
    <scope>NUCLEOTIDE SEQUENCE [LARGE SCALE GENOMIC DNA]</scope>
    <source>
        <strain>E2348/69 / EPEC</strain>
    </source>
</reference>
<accession>B7UJ49</accession>
<keyword id="KW-1185">Reference proteome</keyword>
<sequence>METLTAISRWLAKQHVVTWCVQQEGELWCANAFYLFDAQKVAFYILTEEKTRHAQMSGPQAAIAGTVNGQPKTVALIRGVQFKGEIRRLEGEESDLARKAYNRRFPVARMLSAPVWEIRLDEIKFTDNTLGFGKKLVWQR</sequence>
<gene>
    <name evidence="1" type="primary">yhbP</name>
    <name type="ordered locus">E2348C_3435</name>
</gene>